<accession>Q45500</accession>
<accession>Q796J5</accession>
<gene>
    <name type="primary">yktD</name>
    <name type="ordered locus">BSU14690</name>
</gene>
<keyword id="KW-0489">Methyltransferase</keyword>
<keyword id="KW-1185">Reference proteome</keyword>
<keyword id="KW-0808">Transferase</keyword>
<organism>
    <name type="scientific">Bacillus subtilis (strain 168)</name>
    <dbReference type="NCBI Taxonomy" id="224308"/>
    <lineage>
        <taxon>Bacteria</taxon>
        <taxon>Bacillati</taxon>
        <taxon>Bacillota</taxon>
        <taxon>Bacilli</taxon>
        <taxon>Bacillales</taxon>
        <taxon>Bacillaceae</taxon>
        <taxon>Bacillus</taxon>
    </lineage>
</organism>
<proteinExistence type="inferred from homology"/>
<reference key="1">
    <citation type="journal article" date="1990" name="J. Bacteriol.">
        <title>Secretory S complex of Bacillus subtilis: sequence analysis and identity to pyruvate dehydrogenase.</title>
        <authorList>
            <person name="Hemilae H.O."/>
            <person name="Palva A."/>
            <person name="Paulin L."/>
            <person name="Arvidson S."/>
            <person name="Palva I."/>
        </authorList>
    </citation>
    <scope>NUCLEOTIDE SEQUENCE [GENOMIC DNA]</scope>
    <source>
        <strain>I168</strain>
    </source>
</reference>
<reference key="2">
    <citation type="journal article" date="1997" name="J. Bacteriol.">
        <title>cse15, cse60, and csk22 are new members of mother-cell-specific sporulation regulons in Bacillus subtilis.</title>
        <authorList>
            <person name="Henriques A.O."/>
            <person name="Bryan E.M."/>
            <person name="Beall B.W."/>
            <person name="Moran C.P. Jr."/>
        </authorList>
    </citation>
    <scope>NUCLEOTIDE SEQUENCE [GENOMIC DNA]</scope>
    <source>
        <strain>I168</strain>
    </source>
</reference>
<reference key="3">
    <citation type="journal article" date="1996" name="Microbiology">
        <title>The ampS-nprE (124 degrees-127 degrees) region of the Bacillus subtilis 168 chromosome: sequencing of a 27 kb segment and identification of several genes in the area.</title>
        <authorList>
            <person name="Winters P."/>
            <person name="Caldwell R.M."/>
            <person name="Enfield L."/>
            <person name="Ferrari E."/>
        </authorList>
    </citation>
    <scope>NUCLEOTIDE SEQUENCE [GENOMIC DNA]</scope>
    <source>
        <strain>I168</strain>
    </source>
</reference>
<reference key="4">
    <citation type="journal article" date="1997" name="Nature">
        <title>The complete genome sequence of the Gram-positive bacterium Bacillus subtilis.</title>
        <authorList>
            <person name="Kunst F."/>
            <person name="Ogasawara N."/>
            <person name="Moszer I."/>
            <person name="Albertini A.M."/>
            <person name="Alloni G."/>
            <person name="Azevedo V."/>
            <person name="Bertero M.G."/>
            <person name="Bessieres P."/>
            <person name="Bolotin A."/>
            <person name="Borchert S."/>
            <person name="Borriss R."/>
            <person name="Boursier L."/>
            <person name="Brans A."/>
            <person name="Braun M."/>
            <person name="Brignell S.C."/>
            <person name="Bron S."/>
            <person name="Brouillet S."/>
            <person name="Bruschi C.V."/>
            <person name="Caldwell B."/>
            <person name="Capuano V."/>
            <person name="Carter N.M."/>
            <person name="Choi S.-K."/>
            <person name="Codani J.-J."/>
            <person name="Connerton I.F."/>
            <person name="Cummings N.J."/>
            <person name="Daniel R.A."/>
            <person name="Denizot F."/>
            <person name="Devine K.M."/>
            <person name="Duesterhoeft A."/>
            <person name="Ehrlich S.D."/>
            <person name="Emmerson P.T."/>
            <person name="Entian K.-D."/>
            <person name="Errington J."/>
            <person name="Fabret C."/>
            <person name="Ferrari E."/>
            <person name="Foulger D."/>
            <person name="Fritz C."/>
            <person name="Fujita M."/>
            <person name="Fujita Y."/>
            <person name="Fuma S."/>
            <person name="Galizzi A."/>
            <person name="Galleron N."/>
            <person name="Ghim S.-Y."/>
            <person name="Glaser P."/>
            <person name="Goffeau A."/>
            <person name="Golightly E.J."/>
            <person name="Grandi G."/>
            <person name="Guiseppi G."/>
            <person name="Guy B.J."/>
            <person name="Haga K."/>
            <person name="Haiech J."/>
            <person name="Harwood C.R."/>
            <person name="Henaut A."/>
            <person name="Hilbert H."/>
            <person name="Holsappel S."/>
            <person name="Hosono S."/>
            <person name="Hullo M.-F."/>
            <person name="Itaya M."/>
            <person name="Jones L.-M."/>
            <person name="Joris B."/>
            <person name="Karamata D."/>
            <person name="Kasahara Y."/>
            <person name="Klaerr-Blanchard M."/>
            <person name="Klein C."/>
            <person name="Kobayashi Y."/>
            <person name="Koetter P."/>
            <person name="Koningstein G."/>
            <person name="Krogh S."/>
            <person name="Kumano M."/>
            <person name="Kurita K."/>
            <person name="Lapidus A."/>
            <person name="Lardinois S."/>
            <person name="Lauber J."/>
            <person name="Lazarevic V."/>
            <person name="Lee S.-M."/>
            <person name="Levine A."/>
            <person name="Liu H."/>
            <person name="Masuda S."/>
            <person name="Mauel C."/>
            <person name="Medigue C."/>
            <person name="Medina N."/>
            <person name="Mellado R.P."/>
            <person name="Mizuno M."/>
            <person name="Moestl D."/>
            <person name="Nakai S."/>
            <person name="Noback M."/>
            <person name="Noone D."/>
            <person name="O'Reilly M."/>
            <person name="Ogawa K."/>
            <person name="Ogiwara A."/>
            <person name="Oudega B."/>
            <person name="Park S.-H."/>
            <person name="Parro V."/>
            <person name="Pohl T.M."/>
            <person name="Portetelle D."/>
            <person name="Porwollik S."/>
            <person name="Prescott A.M."/>
            <person name="Presecan E."/>
            <person name="Pujic P."/>
            <person name="Purnelle B."/>
            <person name="Rapoport G."/>
            <person name="Rey M."/>
            <person name="Reynolds S."/>
            <person name="Rieger M."/>
            <person name="Rivolta C."/>
            <person name="Rocha E."/>
            <person name="Roche B."/>
            <person name="Rose M."/>
            <person name="Sadaie Y."/>
            <person name="Sato T."/>
            <person name="Scanlan E."/>
            <person name="Schleich S."/>
            <person name="Schroeter R."/>
            <person name="Scoffone F."/>
            <person name="Sekiguchi J."/>
            <person name="Sekowska A."/>
            <person name="Seror S.J."/>
            <person name="Serror P."/>
            <person name="Shin B.-S."/>
            <person name="Soldo B."/>
            <person name="Sorokin A."/>
            <person name="Tacconi E."/>
            <person name="Takagi T."/>
            <person name="Takahashi H."/>
            <person name="Takemaru K."/>
            <person name="Takeuchi M."/>
            <person name="Tamakoshi A."/>
            <person name="Tanaka T."/>
            <person name="Terpstra P."/>
            <person name="Tognoni A."/>
            <person name="Tosato V."/>
            <person name="Uchiyama S."/>
            <person name="Vandenbol M."/>
            <person name="Vannier F."/>
            <person name="Vassarotti A."/>
            <person name="Viari A."/>
            <person name="Wambutt R."/>
            <person name="Wedler E."/>
            <person name="Wedler H."/>
            <person name="Weitzenegger T."/>
            <person name="Winters P."/>
            <person name="Wipat A."/>
            <person name="Yamamoto H."/>
            <person name="Yamane K."/>
            <person name="Yasumoto K."/>
            <person name="Yata K."/>
            <person name="Yoshida K."/>
            <person name="Yoshikawa H.-F."/>
            <person name="Zumstein E."/>
            <person name="Yoshikawa H."/>
            <person name="Danchin A."/>
        </authorList>
    </citation>
    <scope>NUCLEOTIDE SEQUENCE [LARGE SCALE GENOMIC DNA]</scope>
    <source>
        <strain>168</strain>
    </source>
</reference>
<reference key="5">
    <citation type="journal article" date="2007" name="Biosci. Biotechnol. Biochem.">
        <title>Determination and characterization of IS4Bsu1-insertion loci and identification of a new insertion sequence element of the IS256 family in a natto starter.</title>
        <authorList>
            <person name="Kimura K."/>
            <person name="Itoh Y."/>
        </authorList>
    </citation>
    <scope>POSSIBLE FUNCTION</scope>
</reference>
<dbReference type="EC" id="2.1.1.-"/>
<dbReference type="EMBL" id="AF012285">
    <property type="protein sequence ID" value="AAC24941.1"/>
    <property type="molecule type" value="Genomic_DNA"/>
</dbReference>
<dbReference type="EMBL" id="AL009126">
    <property type="protein sequence ID" value="CAB13342.1"/>
    <property type="molecule type" value="Genomic_DNA"/>
</dbReference>
<dbReference type="PIR" id="F69864">
    <property type="entry name" value="F69864"/>
</dbReference>
<dbReference type="RefSeq" id="NP_389352.1">
    <property type="nucleotide sequence ID" value="NC_000964.3"/>
</dbReference>
<dbReference type="RefSeq" id="WP_003245561.1">
    <property type="nucleotide sequence ID" value="NZ_OZ025638.1"/>
</dbReference>
<dbReference type="SMR" id="Q45500"/>
<dbReference type="FunCoup" id="Q45500">
    <property type="interactions" value="12"/>
</dbReference>
<dbReference type="STRING" id="224308.BSU14690"/>
<dbReference type="PaxDb" id="224308-BSU14690"/>
<dbReference type="EnsemblBacteria" id="CAB13342">
    <property type="protein sequence ID" value="CAB13342"/>
    <property type="gene ID" value="BSU_14690"/>
</dbReference>
<dbReference type="GeneID" id="935978"/>
<dbReference type="KEGG" id="bsu:BSU14690"/>
<dbReference type="PATRIC" id="fig|224308.179.peg.1602"/>
<dbReference type="eggNOG" id="COG3315">
    <property type="taxonomic scope" value="Bacteria"/>
</dbReference>
<dbReference type="InParanoid" id="Q45500"/>
<dbReference type="OrthoDB" id="9806164at2"/>
<dbReference type="PhylomeDB" id="Q45500"/>
<dbReference type="BioCyc" id="BSUB:BSU14690-MONOMER"/>
<dbReference type="Proteomes" id="UP000001570">
    <property type="component" value="Chromosome"/>
</dbReference>
<dbReference type="GO" id="GO:0008168">
    <property type="term" value="F:methyltransferase activity"/>
    <property type="evidence" value="ECO:0007669"/>
    <property type="project" value="UniProtKB-KW"/>
</dbReference>
<dbReference type="GO" id="GO:0032259">
    <property type="term" value="P:methylation"/>
    <property type="evidence" value="ECO:0007669"/>
    <property type="project" value="UniProtKB-KW"/>
</dbReference>
<dbReference type="Gene3D" id="3.40.50.150">
    <property type="entry name" value="Vaccinia Virus protein VP39"/>
    <property type="match status" value="1"/>
</dbReference>
<dbReference type="InterPro" id="IPR007213">
    <property type="entry name" value="Ppm1/Ppm2/Tcmp"/>
</dbReference>
<dbReference type="InterPro" id="IPR029063">
    <property type="entry name" value="SAM-dependent_MTases_sf"/>
</dbReference>
<dbReference type="InterPro" id="IPR011610">
    <property type="entry name" value="SAM_mthyl_Trfase_ML2640-like"/>
</dbReference>
<dbReference type="NCBIfam" id="TIGR00027">
    <property type="entry name" value="mthyl_TIGR00027"/>
    <property type="match status" value="1"/>
</dbReference>
<dbReference type="PANTHER" id="PTHR43619">
    <property type="entry name" value="S-ADENOSYL-L-METHIONINE-DEPENDENT METHYLTRANSFERASE YKTD-RELATED"/>
    <property type="match status" value="1"/>
</dbReference>
<dbReference type="PANTHER" id="PTHR43619:SF2">
    <property type="entry name" value="S-ADENOSYL-L-METHIONINE-DEPENDENT METHYLTRANSFERASES SUPERFAMILY PROTEIN"/>
    <property type="match status" value="1"/>
</dbReference>
<dbReference type="Pfam" id="PF04072">
    <property type="entry name" value="LCM"/>
    <property type="match status" value="1"/>
</dbReference>
<dbReference type="SUPFAM" id="SSF53335">
    <property type="entry name" value="S-adenosyl-L-methionine-dependent methyltransferases"/>
    <property type="match status" value="1"/>
</dbReference>
<sequence length="304" mass="34761">MRKNESSLTSLISAFARAYHSRYDTPLIFDDFIAKDLINEKEFIDISKNMIQEISFFNKEIAERLQNDPEKILKWVAQIQLSPTPLARASYCEKVLHNELILGAKQYVILGAGLDTFCFRHPELENSLQVFEVDHPATQQLKKNKLKDANLTIPGHLHFVPMDFTKTFSYDPLLDEGFKNTKTFFSLLGVSYYVTREENASLISNLFSHVPPGSSIVFDYADETLFTAKGTSNRVEHMVKMAAASGEPMKSCFTYQEIEHLLESSGLLIYEHLSPDDINDLFFSNRKDNLSAFETIHYIHAVKK</sequence>
<protein>
    <recommendedName>
        <fullName>Putative S-adenosyl-L-methionine-dependent methyltransferase YktD</fullName>
        <ecNumber>2.1.1.-</ecNumber>
    </recommendedName>
</protein>
<name>YKTD_BACSU</name>
<evidence type="ECO:0000250" key="1"/>
<evidence type="ECO:0000305" key="2"/>
<feature type="chain" id="PRO_0000360547" description="Putative S-adenosyl-L-methionine-dependent methyltransferase YktD">
    <location>
        <begin position="1"/>
        <end position="304"/>
    </location>
</feature>
<feature type="binding site" evidence="1">
    <location>
        <position position="134"/>
    </location>
    <ligand>
        <name>S-adenosyl-L-methionine</name>
        <dbReference type="ChEBI" id="CHEBI:59789"/>
    </ligand>
</feature>
<feature type="binding site" evidence="1">
    <location>
        <begin position="163"/>
        <end position="164"/>
    </location>
    <ligand>
        <name>S-adenosyl-L-methionine</name>
        <dbReference type="ChEBI" id="CHEBI:59789"/>
    </ligand>
</feature>
<comment type="function">
    <text>May be involved in polyketide synthesis.</text>
</comment>
<comment type="similarity">
    <text evidence="2">Belongs to the UPF0677 family.</text>
</comment>